<evidence type="ECO:0000250" key="1"/>
<evidence type="ECO:0000255" key="2"/>
<evidence type="ECO:0000269" key="3">
    <source>
    </source>
</evidence>
<evidence type="ECO:0000269" key="4">
    <source>
    </source>
</evidence>
<evidence type="ECO:0000305" key="5"/>
<name>OB99B_DROME</name>
<sequence>MKVLIVLLLGLAFVLADHHHHHHDYVVKTHEDLTNYRTQCVEKVHASEELVEKYKKWQYPDDAVTHCYLECIFQKFGFYDTEHGFDVHKIHIQLAGPGVEVHESDEVHQKIAHCAETHSKEGDSCSKAYHAGMCFMNSNLQLVQHSVKV</sequence>
<dbReference type="EMBL" id="EU089070">
    <property type="protein sequence ID" value="ABW78355.1"/>
    <property type="molecule type" value="Genomic_DNA"/>
</dbReference>
<dbReference type="EMBL" id="EU089071">
    <property type="protein sequence ID" value="ABW78356.1"/>
    <property type="molecule type" value="Genomic_DNA"/>
</dbReference>
<dbReference type="EMBL" id="EU089072">
    <property type="protein sequence ID" value="ABW78357.1"/>
    <property type="molecule type" value="Genomic_DNA"/>
</dbReference>
<dbReference type="EMBL" id="EU089073">
    <property type="protein sequence ID" value="ABW78358.1"/>
    <property type="molecule type" value="Genomic_DNA"/>
</dbReference>
<dbReference type="EMBL" id="EU089074">
    <property type="protein sequence ID" value="ABW78359.1"/>
    <property type="molecule type" value="Genomic_DNA"/>
</dbReference>
<dbReference type="EMBL" id="EU089075">
    <property type="protein sequence ID" value="ABW78360.1"/>
    <property type="molecule type" value="Genomic_DNA"/>
</dbReference>
<dbReference type="EMBL" id="EU089076">
    <property type="protein sequence ID" value="ABW78361.1"/>
    <property type="molecule type" value="Genomic_DNA"/>
</dbReference>
<dbReference type="EMBL" id="EU089077">
    <property type="protein sequence ID" value="ABW78362.1"/>
    <property type="molecule type" value="Genomic_DNA"/>
</dbReference>
<dbReference type="EMBL" id="EU089078">
    <property type="protein sequence ID" value="ABW78363.1"/>
    <property type="molecule type" value="Genomic_DNA"/>
</dbReference>
<dbReference type="EMBL" id="EU089079">
    <property type="protein sequence ID" value="ABW78364.1"/>
    <property type="molecule type" value="Genomic_DNA"/>
</dbReference>
<dbReference type="EMBL" id="EU089080">
    <property type="protein sequence ID" value="ABW78365.1"/>
    <property type="molecule type" value="Genomic_DNA"/>
</dbReference>
<dbReference type="EMBL" id="EU089081">
    <property type="protein sequence ID" value="ABW78366.1"/>
    <property type="molecule type" value="Genomic_DNA"/>
</dbReference>
<dbReference type="EMBL" id="EU089082">
    <property type="protein sequence ID" value="ABW78367.1"/>
    <property type="molecule type" value="Genomic_DNA"/>
</dbReference>
<dbReference type="EMBL" id="EU089083">
    <property type="protein sequence ID" value="ABW78368.1"/>
    <property type="molecule type" value="Genomic_DNA"/>
</dbReference>
<dbReference type="EMBL" id="EU089084">
    <property type="protein sequence ID" value="ABW78369.1"/>
    <property type="molecule type" value="Genomic_DNA"/>
</dbReference>
<dbReference type="EMBL" id="EU089085">
    <property type="protein sequence ID" value="ABW78370.1"/>
    <property type="molecule type" value="Genomic_DNA"/>
</dbReference>
<dbReference type="EMBL" id="EU089086">
    <property type="protein sequence ID" value="ABW78371.1"/>
    <property type="molecule type" value="Genomic_DNA"/>
</dbReference>
<dbReference type="EMBL" id="EU089087">
    <property type="protein sequence ID" value="ABW78372.1"/>
    <property type="molecule type" value="Genomic_DNA"/>
</dbReference>
<dbReference type="EMBL" id="EU089088">
    <property type="protein sequence ID" value="ABW78373.1"/>
    <property type="molecule type" value="Genomic_DNA"/>
</dbReference>
<dbReference type="EMBL" id="EU089089">
    <property type="protein sequence ID" value="ABW78374.1"/>
    <property type="molecule type" value="Genomic_DNA"/>
</dbReference>
<dbReference type="EMBL" id="EU089090">
    <property type="protein sequence ID" value="ABW78375.1"/>
    <property type="molecule type" value="Genomic_DNA"/>
</dbReference>
<dbReference type="EMBL" id="EU089091">
    <property type="protein sequence ID" value="ABW78376.1"/>
    <property type="molecule type" value="Genomic_DNA"/>
</dbReference>
<dbReference type="EMBL" id="EU089092">
    <property type="protein sequence ID" value="ABW78377.1"/>
    <property type="molecule type" value="Genomic_DNA"/>
</dbReference>
<dbReference type="EMBL" id="EU089093">
    <property type="protein sequence ID" value="ABW78378.1"/>
    <property type="molecule type" value="Genomic_DNA"/>
</dbReference>
<dbReference type="EMBL" id="EU089094">
    <property type="protein sequence ID" value="ABW78379.1"/>
    <property type="molecule type" value="Genomic_DNA"/>
</dbReference>
<dbReference type="EMBL" id="EU089095">
    <property type="protein sequence ID" value="ABW78380.1"/>
    <property type="molecule type" value="Genomic_DNA"/>
</dbReference>
<dbReference type="EMBL" id="EU089096">
    <property type="protein sequence ID" value="ABW78381.1"/>
    <property type="molecule type" value="Genomic_DNA"/>
</dbReference>
<dbReference type="EMBL" id="EU089097">
    <property type="protein sequence ID" value="ABW78382.1"/>
    <property type="molecule type" value="Genomic_DNA"/>
</dbReference>
<dbReference type="EMBL" id="EU089098">
    <property type="protein sequence ID" value="ABW78383.1"/>
    <property type="molecule type" value="Genomic_DNA"/>
</dbReference>
<dbReference type="EMBL" id="EU089099">
    <property type="protein sequence ID" value="ABW78384.1"/>
    <property type="molecule type" value="Genomic_DNA"/>
</dbReference>
<dbReference type="EMBL" id="EU089100">
    <property type="protein sequence ID" value="ABW78385.1"/>
    <property type="molecule type" value="Genomic_DNA"/>
</dbReference>
<dbReference type="EMBL" id="EU089101">
    <property type="protein sequence ID" value="ABW78386.1"/>
    <property type="molecule type" value="Genomic_DNA"/>
</dbReference>
<dbReference type="EMBL" id="EU089102">
    <property type="protein sequence ID" value="ABW78387.1"/>
    <property type="molecule type" value="Genomic_DNA"/>
</dbReference>
<dbReference type="EMBL" id="EU089103">
    <property type="protein sequence ID" value="ABW78388.1"/>
    <property type="molecule type" value="Genomic_DNA"/>
</dbReference>
<dbReference type="EMBL" id="EU089104">
    <property type="protein sequence ID" value="ABW78389.1"/>
    <property type="molecule type" value="Genomic_DNA"/>
</dbReference>
<dbReference type="EMBL" id="EU089105">
    <property type="protein sequence ID" value="ABW78390.1"/>
    <property type="molecule type" value="Genomic_DNA"/>
</dbReference>
<dbReference type="EMBL" id="EU089106">
    <property type="protein sequence ID" value="ABW78391.1"/>
    <property type="molecule type" value="Genomic_DNA"/>
</dbReference>
<dbReference type="EMBL" id="EU089107">
    <property type="protein sequence ID" value="ABW78392.1"/>
    <property type="molecule type" value="Genomic_DNA"/>
</dbReference>
<dbReference type="EMBL" id="EU089108">
    <property type="protein sequence ID" value="ABW78393.1"/>
    <property type="molecule type" value="Genomic_DNA"/>
</dbReference>
<dbReference type="EMBL" id="EU089109">
    <property type="protein sequence ID" value="ABW78394.1"/>
    <property type="molecule type" value="Genomic_DNA"/>
</dbReference>
<dbReference type="EMBL" id="EU089110">
    <property type="protein sequence ID" value="ABW78395.1"/>
    <property type="molecule type" value="Genomic_DNA"/>
</dbReference>
<dbReference type="EMBL" id="EU089111">
    <property type="protein sequence ID" value="ABW78396.1"/>
    <property type="molecule type" value="Genomic_DNA"/>
</dbReference>
<dbReference type="EMBL" id="EU089112">
    <property type="protein sequence ID" value="ABW78397.1"/>
    <property type="molecule type" value="Genomic_DNA"/>
</dbReference>
<dbReference type="EMBL" id="EU089113">
    <property type="protein sequence ID" value="ABW78398.1"/>
    <property type="molecule type" value="Genomic_DNA"/>
</dbReference>
<dbReference type="EMBL" id="EU089114">
    <property type="protein sequence ID" value="ABW78399.1"/>
    <property type="molecule type" value="Genomic_DNA"/>
</dbReference>
<dbReference type="EMBL" id="EU089115">
    <property type="protein sequence ID" value="ABW78400.1"/>
    <property type="molecule type" value="Genomic_DNA"/>
</dbReference>
<dbReference type="EMBL" id="EU089116">
    <property type="protein sequence ID" value="ABW78401.1"/>
    <property type="molecule type" value="Genomic_DNA"/>
</dbReference>
<dbReference type="EMBL" id="EU089117">
    <property type="protein sequence ID" value="ABW78402.1"/>
    <property type="molecule type" value="Genomic_DNA"/>
</dbReference>
<dbReference type="EMBL" id="EU089118">
    <property type="protein sequence ID" value="ABW78403.1"/>
    <property type="molecule type" value="Genomic_DNA"/>
</dbReference>
<dbReference type="EMBL" id="EU089119">
    <property type="protein sequence ID" value="ABW78404.1"/>
    <property type="molecule type" value="Genomic_DNA"/>
</dbReference>
<dbReference type="EMBL" id="EU089120">
    <property type="protein sequence ID" value="ABW78405.1"/>
    <property type="molecule type" value="Genomic_DNA"/>
</dbReference>
<dbReference type="EMBL" id="EU089121">
    <property type="protein sequence ID" value="ABW78406.1"/>
    <property type="molecule type" value="Genomic_DNA"/>
</dbReference>
<dbReference type="EMBL" id="EU089122">
    <property type="protein sequence ID" value="ABW78407.1"/>
    <property type="molecule type" value="Genomic_DNA"/>
</dbReference>
<dbReference type="EMBL" id="EU089123">
    <property type="protein sequence ID" value="ABW78408.1"/>
    <property type="molecule type" value="Genomic_DNA"/>
</dbReference>
<dbReference type="EMBL" id="EU089124">
    <property type="protein sequence ID" value="ABW78409.1"/>
    <property type="molecule type" value="Genomic_DNA"/>
</dbReference>
<dbReference type="EMBL" id="EU089125">
    <property type="protein sequence ID" value="ABW78410.1"/>
    <property type="molecule type" value="Genomic_DNA"/>
</dbReference>
<dbReference type="EMBL" id="EU089126">
    <property type="protein sequence ID" value="ABW78411.1"/>
    <property type="molecule type" value="Genomic_DNA"/>
</dbReference>
<dbReference type="EMBL" id="EU089127">
    <property type="protein sequence ID" value="ABW78412.1"/>
    <property type="molecule type" value="Genomic_DNA"/>
</dbReference>
<dbReference type="EMBL" id="EU089128">
    <property type="protein sequence ID" value="ABW78413.1"/>
    <property type="molecule type" value="Genomic_DNA"/>
</dbReference>
<dbReference type="EMBL" id="EU089129">
    <property type="protein sequence ID" value="ABW78414.1"/>
    <property type="molecule type" value="Genomic_DNA"/>
</dbReference>
<dbReference type="EMBL" id="EU089130">
    <property type="protein sequence ID" value="ABW78415.1"/>
    <property type="molecule type" value="Genomic_DNA"/>
</dbReference>
<dbReference type="EMBL" id="EU089131">
    <property type="protein sequence ID" value="ABW78416.1"/>
    <property type="molecule type" value="Genomic_DNA"/>
</dbReference>
<dbReference type="EMBL" id="EU089132">
    <property type="protein sequence ID" value="ABW78417.1"/>
    <property type="molecule type" value="Genomic_DNA"/>
</dbReference>
<dbReference type="EMBL" id="EU089133">
    <property type="protein sequence ID" value="ABW78418.1"/>
    <property type="molecule type" value="Genomic_DNA"/>
</dbReference>
<dbReference type="EMBL" id="EU089134">
    <property type="protein sequence ID" value="ABW78419.1"/>
    <property type="molecule type" value="Genomic_DNA"/>
</dbReference>
<dbReference type="EMBL" id="EU089135">
    <property type="protein sequence ID" value="ABW78420.1"/>
    <property type="molecule type" value="Genomic_DNA"/>
</dbReference>
<dbReference type="EMBL" id="EU089136">
    <property type="protein sequence ID" value="ABW78421.1"/>
    <property type="molecule type" value="Genomic_DNA"/>
</dbReference>
<dbReference type="EMBL" id="EU089137">
    <property type="protein sequence ID" value="ABW78422.1"/>
    <property type="molecule type" value="Genomic_DNA"/>
</dbReference>
<dbReference type="EMBL" id="EU089138">
    <property type="protein sequence ID" value="ABW78423.1"/>
    <property type="molecule type" value="Genomic_DNA"/>
</dbReference>
<dbReference type="EMBL" id="EU089139">
    <property type="protein sequence ID" value="ABW78424.1"/>
    <property type="molecule type" value="Genomic_DNA"/>
</dbReference>
<dbReference type="EMBL" id="EU089140">
    <property type="protein sequence ID" value="ABW78425.1"/>
    <property type="molecule type" value="Genomic_DNA"/>
</dbReference>
<dbReference type="EMBL" id="EU089141">
    <property type="protein sequence ID" value="ABW78426.1"/>
    <property type="molecule type" value="Genomic_DNA"/>
</dbReference>
<dbReference type="EMBL" id="EU089142">
    <property type="protein sequence ID" value="ABW78427.1"/>
    <property type="molecule type" value="Genomic_DNA"/>
</dbReference>
<dbReference type="EMBL" id="EU089143">
    <property type="protein sequence ID" value="ABW78428.1"/>
    <property type="molecule type" value="Genomic_DNA"/>
</dbReference>
<dbReference type="EMBL" id="EU089144">
    <property type="protein sequence ID" value="ABW78429.1"/>
    <property type="molecule type" value="Genomic_DNA"/>
</dbReference>
<dbReference type="EMBL" id="EU089145">
    <property type="protein sequence ID" value="ABW78430.1"/>
    <property type="molecule type" value="Genomic_DNA"/>
</dbReference>
<dbReference type="EMBL" id="EU089146">
    <property type="protein sequence ID" value="ABW78431.1"/>
    <property type="molecule type" value="Genomic_DNA"/>
</dbReference>
<dbReference type="EMBL" id="EU089147">
    <property type="protein sequence ID" value="ABW78432.1"/>
    <property type="molecule type" value="Genomic_DNA"/>
</dbReference>
<dbReference type="EMBL" id="EU089148">
    <property type="protein sequence ID" value="ABW78433.1"/>
    <property type="molecule type" value="Genomic_DNA"/>
</dbReference>
<dbReference type="EMBL" id="EU089149">
    <property type="protein sequence ID" value="ABW78434.1"/>
    <property type="molecule type" value="Genomic_DNA"/>
</dbReference>
<dbReference type="EMBL" id="EU089150">
    <property type="protein sequence ID" value="ABW78435.1"/>
    <property type="molecule type" value="Genomic_DNA"/>
</dbReference>
<dbReference type="EMBL" id="EU089151">
    <property type="protein sequence ID" value="ABW78436.1"/>
    <property type="molecule type" value="Genomic_DNA"/>
</dbReference>
<dbReference type="EMBL" id="EU089152">
    <property type="protein sequence ID" value="ABW78437.1"/>
    <property type="molecule type" value="Genomic_DNA"/>
</dbReference>
<dbReference type="EMBL" id="EU089153">
    <property type="protein sequence ID" value="ABW78438.1"/>
    <property type="molecule type" value="Genomic_DNA"/>
</dbReference>
<dbReference type="EMBL" id="EU089154">
    <property type="protein sequence ID" value="ABW78439.1"/>
    <property type="molecule type" value="Genomic_DNA"/>
</dbReference>
<dbReference type="EMBL" id="EU089155">
    <property type="protein sequence ID" value="ABW78440.1"/>
    <property type="molecule type" value="Genomic_DNA"/>
</dbReference>
<dbReference type="EMBL" id="EU089156">
    <property type="protein sequence ID" value="ABW78441.1"/>
    <property type="molecule type" value="Genomic_DNA"/>
</dbReference>
<dbReference type="EMBL" id="EU089157">
    <property type="protein sequence ID" value="ABW78442.1"/>
    <property type="molecule type" value="Genomic_DNA"/>
</dbReference>
<dbReference type="EMBL" id="EU089158">
    <property type="protein sequence ID" value="ABW78443.1"/>
    <property type="molecule type" value="Genomic_DNA"/>
</dbReference>
<dbReference type="EMBL" id="EU089159">
    <property type="protein sequence ID" value="ABW78444.1"/>
    <property type="molecule type" value="Genomic_DNA"/>
</dbReference>
<dbReference type="EMBL" id="EU089160">
    <property type="protein sequence ID" value="ABW78445.1"/>
    <property type="molecule type" value="Genomic_DNA"/>
</dbReference>
<dbReference type="EMBL" id="EU089161">
    <property type="protein sequence ID" value="ABW78446.1"/>
    <property type="molecule type" value="Genomic_DNA"/>
</dbReference>
<dbReference type="EMBL" id="EU089162">
    <property type="protein sequence ID" value="ABW78447.1"/>
    <property type="molecule type" value="Genomic_DNA"/>
</dbReference>
<dbReference type="EMBL" id="EU089163">
    <property type="protein sequence ID" value="ABW78448.1"/>
    <property type="molecule type" value="Genomic_DNA"/>
</dbReference>
<dbReference type="EMBL" id="EU089164">
    <property type="protein sequence ID" value="ABW78449.1"/>
    <property type="molecule type" value="Genomic_DNA"/>
</dbReference>
<dbReference type="EMBL" id="EU089165">
    <property type="protein sequence ID" value="ABW78450.1"/>
    <property type="molecule type" value="Genomic_DNA"/>
</dbReference>
<dbReference type="EMBL" id="EU089166">
    <property type="protein sequence ID" value="ABW78451.1"/>
    <property type="molecule type" value="Genomic_DNA"/>
</dbReference>
<dbReference type="EMBL" id="EU089167">
    <property type="protein sequence ID" value="ABW78452.1"/>
    <property type="molecule type" value="Genomic_DNA"/>
</dbReference>
<dbReference type="EMBL" id="EU089168">
    <property type="protein sequence ID" value="ABW78453.1"/>
    <property type="molecule type" value="Genomic_DNA"/>
</dbReference>
<dbReference type="EMBL" id="EU089169">
    <property type="protein sequence ID" value="ABW78454.1"/>
    <property type="molecule type" value="Genomic_DNA"/>
</dbReference>
<dbReference type="EMBL" id="EU089170">
    <property type="protein sequence ID" value="ABW78455.1"/>
    <property type="molecule type" value="Genomic_DNA"/>
</dbReference>
<dbReference type="EMBL" id="EU089171">
    <property type="protein sequence ID" value="ABW78456.1"/>
    <property type="molecule type" value="Genomic_DNA"/>
</dbReference>
<dbReference type="EMBL" id="EU089172">
    <property type="protein sequence ID" value="ABW78457.1"/>
    <property type="molecule type" value="Genomic_DNA"/>
</dbReference>
<dbReference type="EMBL" id="EU089173">
    <property type="protein sequence ID" value="ABW78458.1"/>
    <property type="molecule type" value="Genomic_DNA"/>
</dbReference>
<dbReference type="EMBL" id="EU089174">
    <property type="protein sequence ID" value="ABW78459.1"/>
    <property type="molecule type" value="Genomic_DNA"/>
</dbReference>
<dbReference type="EMBL" id="EU089175">
    <property type="protein sequence ID" value="ABW78460.1"/>
    <property type="molecule type" value="Genomic_DNA"/>
</dbReference>
<dbReference type="EMBL" id="EU089176">
    <property type="protein sequence ID" value="ABW78461.1"/>
    <property type="molecule type" value="Genomic_DNA"/>
</dbReference>
<dbReference type="EMBL" id="EU089177">
    <property type="protein sequence ID" value="ABW78462.1"/>
    <property type="molecule type" value="Genomic_DNA"/>
</dbReference>
<dbReference type="EMBL" id="EU089178">
    <property type="protein sequence ID" value="ABW78463.1"/>
    <property type="molecule type" value="Genomic_DNA"/>
</dbReference>
<dbReference type="EMBL" id="EU089179">
    <property type="protein sequence ID" value="ABW78464.1"/>
    <property type="molecule type" value="Genomic_DNA"/>
</dbReference>
<dbReference type="EMBL" id="EU089180">
    <property type="protein sequence ID" value="ABW78465.1"/>
    <property type="molecule type" value="Genomic_DNA"/>
</dbReference>
<dbReference type="EMBL" id="EU089181">
    <property type="protein sequence ID" value="ABW78466.1"/>
    <property type="molecule type" value="Genomic_DNA"/>
</dbReference>
<dbReference type="EMBL" id="EU089182">
    <property type="protein sequence ID" value="ABW78467.1"/>
    <property type="molecule type" value="Genomic_DNA"/>
</dbReference>
<dbReference type="EMBL" id="EU089183">
    <property type="protein sequence ID" value="ABW78468.1"/>
    <property type="molecule type" value="Genomic_DNA"/>
</dbReference>
<dbReference type="EMBL" id="EU089184">
    <property type="protein sequence ID" value="ABW78469.1"/>
    <property type="molecule type" value="Genomic_DNA"/>
</dbReference>
<dbReference type="EMBL" id="EU089185">
    <property type="protein sequence ID" value="ABW78470.1"/>
    <property type="molecule type" value="Genomic_DNA"/>
</dbReference>
<dbReference type="EMBL" id="EU089186">
    <property type="protein sequence ID" value="ABW78471.1"/>
    <property type="molecule type" value="Genomic_DNA"/>
</dbReference>
<dbReference type="EMBL" id="EU089187">
    <property type="protein sequence ID" value="ABW78472.1"/>
    <property type="molecule type" value="Genomic_DNA"/>
</dbReference>
<dbReference type="EMBL" id="EU089188">
    <property type="protein sequence ID" value="ABW78473.1"/>
    <property type="molecule type" value="Genomic_DNA"/>
</dbReference>
<dbReference type="EMBL" id="EU089189">
    <property type="protein sequence ID" value="ABW78474.1"/>
    <property type="molecule type" value="Genomic_DNA"/>
</dbReference>
<dbReference type="EMBL" id="EU089190">
    <property type="protein sequence ID" value="ABW78475.1"/>
    <property type="molecule type" value="Genomic_DNA"/>
</dbReference>
<dbReference type="EMBL" id="EU089191">
    <property type="protein sequence ID" value="ABW78476.1"/>
    <property type="molecule type" value="Genomic_DNA"/>
</dbReference>
<dbReference type="EMBL" id="EU089192">
    <property type="protein sequence ID" value="ABW78477.1"/>
    <property type="molecule type" value="Genomic_DNA"/>
</dbReference>
<dbReference type="EMBL" id="EU089193">
    <property type="protein sequence ID" value="ABW78478.1"/>
    <property type="molecule type" value="Genomic_DNA"/>
</dbReference>
<dbReference type="EMBL" id="EU089194">
    <property type="protein sequence ID" value="ABW78479.1"/>
    <property type="molecule type" value="Genomic_DNA"/>
</dbReference>
<dbReference type="EMBL" id="EU089195">
    <property type="protein sequence ID" value="ABW78480.1"/>
    <property type="molecule type" value="Genomic_DNA"/>
</dbReference>
<dbReference type="EMBL" id="EU089196">
    <property type="protein sequence ID" value="ABW78481.1"/>
    <property type="molecule type" value="Genomic_DNA"/>
</dbReference>
<dbReference type="EMBL" id="EU089197">
    <property type="protein sequence ID" value="ABW78482.1"/>
    <property type="molecule type" value="Genomic_DNA"/>
</dbReference>
<dbReference type="EMBL" id="EU089198">
    <property type="protein sequence ID" value="ABW78483.1"/>
    <property type="molecule type" value="Genomic_DNA"/>
</dbReference>
<dbReference type="EMBL" id="EU089199">
    <property type="protein sequence ID" value="ABW78484.1"/>
    <property type="molecule type" value="Genomic_DNA"/>
</dbReference>
<dbReference type="EMBL" id="EU089200">
    <property type="protein sequence ID" value="ABW78485.1"/>
    <property type="molecule type" value="Genomic_DNA"/>
</dbReference>
<dbReference type="EMBL" id="EU089201">
    <property type="protein sequence ID" value="ABW78486.1"/>
    <property type="molecule type" value="Genomic_DNA"/>
</dbReference>
<dbReference type="EMBL" id="EU089202">
    <property type="protein sequence ID" value="ABW78487.1"/>
    <property type="molecule type" value="Genomic_DNA"/>
</dbReference>
<dbReference type="EMBL" id="EU089203">
    <property type="protein sequence ID" value="ABW78488.1"/>
    <property type="molecule type" value="Genomic_DNA"/>
</dbReference>
<dbReference type="EMBL" id="EU089204">
    <property type="protein sequence ID" value="ABW78489.1"/>
    <property type="molecule type" value="Genomic_DNA"/>
</dbReference>
<dbReference type="EMBL" id="EU089205">
    <property type="protein sequence ID" value="ABW78490.1"/>
    <property type="molecule type" value="Genomic_DNA"/>
</dbReference>
<dbReference type="EMBL" id="EU089206">
    <property type="protein sequence ID" value="ABW78491.1"/>
    <property type="molecule type" value="Genomic_DNA"/>
</dbReference>
<dbReference type="EMBL" id="EU089207">
    <property type="protein sequence ID" value="ABW78492.1"/>
    <property type="molecule type" value="Genomic_DNA"/>
</dbReference>
<dbReference type="EMBL" id="EU089208">
    <property type="protein sequence ID" value="ABW78493.1"/>
    <property type="molecule type" value="Genomic_DNA"/>
</dbReference>
<dbReference type="EMBL" id="EU089209">
    <property type="protein sequence ID" value="ABW78494.1"/>
    <property type="molecule type" value="Genomic_DNA"/>
</dbReference>
<dbReference type="EMBL" id="EU089210">
    <property type="protein sequence ID" value="ABW78495.1"/>
    <property type="molecule type" value="Genomic_DNA"/>
</dbReference>
<dbReference type="EMBL" id="EU089211">
    <property type="protein sequence ID" value="ABW78496.1"/>
    <property type="molecule type" value="Genomic_DNA"/>
</dbReference>
<dbReference type="EMBL" id="EU089212">
    <property type="protein sequence ID" value="ABW78497.1"/>
    <property type="molecule type" value="Genomic_DNA"/>
</dbReference>
<dbReference type="EMBL" id="EU089213">
    <property type="protein sequence ID" value="ABW78498.1"/>
    <property type="molecule type" value="Genomic_DNA"/>
</dbReference>
<dbReference type="EMBL" id="EU089214">
    <property type="protein sequence ID" value="ABW78499.1"/>
    <property type="molecule type" value="Genomic_DNA"/>
</dbReference>
<dbReference type="EMBL" id="EU089215">
    <property type="protein sequence ID" value="ABW78500.1"/>
    <property type="molecule type" value="Genomic_DNA"/>
</dbReference>
<dbReference type="EMBL" id="EU089216">
    <property type="protein sequence ID" value="ABW78501.1"/>
    <property type="molecule type" value="Genomic_DNA"/>
</dbReference>
<dbReference type="EMBL" id="EU089217">
    <property type="protein sequence ID" value="ABW78502.1"/>
    <property type="molecule type" value="Genomic_DNA"/>
</dbReference>
<dbReference type="EMBL" id="EU089218">
    <property type="protein sequence ID" value="ABW78503.1"/>
    <property type="molecule type" value="Genomic_DNA"/>
</dbReference>
<dbReference type="EMBL" id="EU089219">
    <property type="protein sequence ID" value="ABW78504.1"/>
    <property type="molecule type" value="Genomic_DNA"/>
</dbReference>
<dbReference type="EMBL" id="EU089220">
    <property type="protein sequence ID" value="ABW78505.1"/>
    <property type="molecule type" value="Genomic_DNA"/>
</dbReference>
<dbReference type="EMBL" id="EU089221">
    <property type="protein sequence ID" value="ABW78506.1"/>
    <property type="molecule type" value="Genomic_DNA"/>
</dbReference>
<dbReference type="EMBL" id="EU089222">
    <property type="protein sequence ID" value="ABW78507.1"/>
    <property type="molecule type" value="Genomic_DNA"/>
</dbReference>
<dbReference type="EMBL" id="EU089223">
    <property type="protein sequence ID" value="ABW78508.1"/>
    <property type="molecule type" value="Genomic_DNA"/>
</dbReference>
<dbReference type="EMBL" id="EU089224">
    <property type="protein sequence ID" value="ABW78509.1"/>
    <property type="molecule type" value="Genomic_DNA"/>
</dbReference>
<dbReference type="EMBL" id="EU089225">
    <property type="protein sequence ID" value="ABW78510.1"/>
    <property type="molecule type" value="Genomic_DNA"/>
</dbReference>
<dbReference type="EMBL" id="EU089226">
    <property type="protein sequence ID" value="ABW78511.1"/>
    <property type="molecule type" value="Genomic_DNA"/>
</dbReference>
<dbReference type="EMBL" id="EU089227">
    <property type="protein sequence ID" value="ABW78512.1"/>
    <property type="molecule type" value="Genomic_DNA"/>
</dbReference>
<dbReference type="EMBL" id="EU089228">
    <property type="protein sequence ID" value="ABW78513.1"/>
    <property type="molecule type" value="Genomic_DNA"/>
</dbReference>
<dbReference type="EMBL" id="EU089229">
    <property type="protein sequence ID" value="ABW78514.1"/>
    <property type="molecule type" value="Genomic_DNA"/>
</dbReference>
<dbReference type="EMBL" id="EU089230">
    <property type="protein sequence ID" value="ABW78515.1"/>
    <property type="molecule type" value="Genomic_DNA"/>
</dbReference>
<dbReference type="EMBL" id="EU089231">
    <property type="protein sequence ID" value="ABW78516.1"/>
    <property type="molecule type" value="Genomic_DNA"/>
</dbReference>
<dbReference type="EMBL" id="EU089232">
    <property type="protein sequence ID" value="ABW78517.1"/>
    <property type="molecule type" value="Genomic_DNA"/>
</dbReference>
<dbReference type="EMBL" id="EU089233">
    <property type="protein sequence ID" value="ABW78518.1"/>
    <property type="molecule type" value="Genomic_DNA"/>
</dbReference>
<dbReference type="EMBL" id="EU089234">
    <property type="protein sequence ID" value="ABW78519.1"/>
    <property type="molecule type" value="Genomic_DNA"/>
</dbReference>
<dbReference type="EMBL" id="EU089235">
    <property type="protein sequence ID" value="ABW78520.1"/>
    <property type="molecule type" value="Genomic_DNA"/>
</dbReference>
<dbReference type="EMBL" id="EU089236">
    <property type="protein sequence ID" value="ABW78521.1"/>
    <property type="molecule type" value="Genomic_DNA"/>
</dbReference>
<dbReference type="EMBL" id="EU089237">
    <property type="protein sequence ID" value="ABW78522.1"/>
    <property type="molecule type" value="Genomic_DNA"/>
</dbReference>
<dbReference type="EMBL" id="EU089238">
    <property type="protein sequence ID" value="ABW78523.1"/>
    <property type="molecule type" value="Genomic_DNA"/>
</dbReference>
<dbReference type="EMBL" id="EU089239">
    <property type="protein sequence ID" value="ABW78524.1"/>
    <property type="molecule type" value="Genomic_DNA"/>
</dbReference>
<dbReference type="EMBL" id="EU089240">
    <property type="protein sequence ID" value="ABW78525.1"/>
    <property type="molecule type" value="Genomic_DNA"/>
</dbReference>
<dbReference type="EMBL" id="EU089241">
    <property type="protein sequence ID" value="ABW78526.1"/>
    <property type="molecule type" value="Genomic_DNA"/>
</dbReference>
<dbReference type="EMBL" id="EU089242">
    <property type="protein sequence ID" value="ABW78527.1"/>
    <property type="molecule type" value="Genomic_DNA"/>
</dbReference>
<dbReference type="EMBL" id="EU089243">
    <property type="protein sequence ID" value="ABW78528.1"/>
    <property type="molecule type" value="Genomic_DNA"/>
</dbReference>
<dbReference type="EMBL" id="EU089244">
    <property type="protein sequence ID" value="ABW78529.1"/>
    <property type="molecule type" value="Genomic_DNA"/>
</dbReference>
<dbReference type="EMBL" id="EU089245">
    <property type="protein sequence ID" value="ABW78530.1"/>
    <property type="molecule type" value="Genomic_DNA"/>
</dbReference>
<dbReference type="EMBL" id="EU089246">
    <property type="protein sequence ID" value="ABW78531.1"/>
    <property type="molecule type" value="Genomic_DNA"/>
</dbReference>
<dbReference type="EMBL" id="EU089247">
    <property type="protein sequence ID" value="ABW78532.1"/>
    <property type="molecule type" value="Genomic_DNA"/>
</dbReference>
<dbReference type="EMBL" id="EU089248">
    <property type="protein sequence ID" value="ABW78533.1"/>
    <property type="molecule type" value="Genomic_DNA"/>
</dbReference>
<dbReference type="EMBL" id="EU089249">
    <property type="protein sequence ID" value="ABW78534.1"/>
    <property type="molecule type" value="Genomic_DNA"/>
</dbReference>
<dbReference type="EMBL" id="EU089250">
    <property type="protein sequence ID" value="ABW78535.1"/>
    <property type="molecule type" value="Genomic_DNA"/>
</dbReference>
<dbReference type="EMBL" id="EU089251">
    <property type="protein sequence ID" value="ABW78536.1"/>
    <property type="molecule type" value="Genomic_DNA"/>
</dbReference>
<dbReference type="EMBL" id="EU089252">
    <property type="protein sequence ID" value="ABW78537.1"/>
    <property type="molecule type" value="Genomic_DNA"/>
</dbReference>
<dbReference type="EMBL" id="EU089253">
    <property type="protein sequence ID" value="ABW78538.1"/>
    <property type="molecule type" value="Genomic_DNA"/>
</dbReference>
<dbReference type="EMBL" id="EU089254">
    <property type="protein sequence ID" value="ABW78539.1"/>
    <property type="molecule type" value="Genomic_DNA"/>
</dbReference>
<dbReference type="EMBL" id="EU089255">
    <property type="protein sequence ID" value="ABW78540.1"/>
    <property type="molecule type" value="Genomic_DNA"/>
</dbReference>
<dbReference type="EMBL" id="EU089256">
    <property type="protein sequence ID" value="ABW78541.1"/>
    <property type="molecule type" value="Genomic_DNA"/>
</dbReference>
<dbReference type="EMBL" id="EU089257">
    <property type="protein sequence ID" value="ABW78542.1"/>
    <property type="molecule type" value="Genomic_DNA"/>
</dbReference>
<dbReference type="EMBL" id="EU089258">
    <property type="protein sequence ID" value="ABW78543.1"/>
    <property type="molecule type" value="Genomic_DNA"/>
</dbReference>
<dbReference type="EMBL" id="EU089259">
    <property type="protein sequence ID" value="ABW78544.1"/>
    <property type="molecule type" value="Genomic_DNA"/>
</dbReference>
<dbReference type="EMBL" id="EU089260">
    <property type="protein sequence ID" value="ABW78545.1"/>
    <property type="molecule type" value="Genomic_DNA"/>
</dbReference>
<dbReference type="EMBL" id="EU089261">
    <property type="protein sequence ID" value="ABW78546.1"/>
    <property type="molecule type" value="Genomic_DNA"/>
</dbReference>
<dbReference type="EMBL" id="EU089262">
    <property type="protein sequence ID" value="ABW78547.1"/>
    <property type="molecule type" value="Genomic_DNA"/>
</dbReference>
<dbReference type="EMBL" id="AE014297">
    <property type="protein sequence ID" value="AAF56921.1"/>
    <property type="molecule type" value="Genomic_DNA"/>
</dbReference>
<dbReference type="EMBL" id="AY119044">
    <property type="protein sequence ID" value="AAM50904.1"/>
    <property type="molecule type" value="mRNA"/>
</dbReference>
<dbReference type="RefSeq" id="NP_001263078.1">
    <property type="nucleotide sequence ID" value="NM_001276149.1"/>
</dbReference>
<dbReference type="RefSeq" id="NP_651713.1">
    <property type="nucleotide sequence ID" value="NM_143456.3"/>
</dbReference>
<dbReference type="SMR" id="Q9VAI6"/>
<dbReference type="BioGRID" id="68361">
    <property type="interactions" value="1"/>
</dbReference>
<dbReference type="FunCoup" id="Q9VAI6">
    <property type="interactions" value="6"/>
</dbReference>
<dbReference type="IntAct" id="Q9VAI6">
    <property type="interactions" value="10"/>
</dbReference>
<dbReference type="STRING" id="7227.FBpp0305400"/>
<dbReference type="PaxDb" id="7227-FBpp0305400"/>
<dbReference type="DNASU" id="43497"/>
<dbReference type="EnsemblMetazoa" id="FBtr0085462">
    <property type="protein sequence ID" value="FBpp0084828"/>
    <property type="gene ID" value="FBgn0039685"/>
</dbReference>
<dbReference type="EnsemblMetazoa" id="FBtr0333198">
    <property type="protein sequence ID" value="FBpp0305400"/>
    <property type="gene ID" value="FBgn0039685"/>
</dbReference>
<dbReference type="GeneID" id="43497"/>
<dbReference type="KEGG" id="dme:Dmel_CG7592"/>
<dbReference type="AGR" id="FB:FBgn0039685"/>
<dbReference type="CTD" id="43497"/>
<dbReference type="FlyBase" id="FBgn0039685">
    <property type="gene designation" value="Obp99b"/>
</dbReference>
<dbReference type="VEuPathDB" id="VectorBase:FBgn0039685"/>
<dbReference type="eggNOG" id="ENOG502TBSH">
    <property type="taxonomic scope" value="Eukaryota"/>
</dbReference>
<dbReference type="GeneTree" id="ENSGT00390000004379"/>
<dbReference type="HOGENOM" id="CLU_144993_1_0_1"/>
<dbReference type="InParanoid" id="Q9VAI6"/>
<dbReference type="OMA" id="HKIHVQL"/>
<dbReference type="OrthoDB" id="5978988at2759"/>
<dbReference type="PhylomeDB" id="Q9VAI6"/>
<dbReference type="BioGRID-ORCS" id="43497">
    <property type="hits" value="0 hits in 1 CRISPR screen"/>
</dbReference>
<dbReference type="ChiTaRS" id="Obp99b">
    <property type="organism name" value="fly"/>
</dbReference>
<dbReference type="GenomeRNAi" id="43497"/>
<dbReference type="PRO" id="PR:Q9VAI6"/>
<dbReference type="Proteomes" id="UP000000803">
    <property type="component" value="Chromosome 3R"/>
</dbReference>
<dbReference type="Bgee" id="FBgn0039685">
    <property type="expression patterns" value="Expressed in fat body cell in testis and 60 other cell types or tissues"/>
</dbReference>
<dbReference type="ExpressionAtlas" id="Q9VAI6">
    <property type="expression patterns" value="baseline and differential"/>
</dbReference>
<dbReference type="GO" id="GO:0005576">
    <property type="term" value="C:extracellular region"/>
    <property type="evidence" value="ECO:0000250"/>
    <property type="project" value="UniProtKB"/>
</dbReference>
<dbReference type="GO" id="GO:0005615">
    <property type="term" value="C:extracellular space"/>
    <property type="evidence" value="ECO:0000318"/>
    <property type="project" value="GO_Central"/>
</dbReference>
<dbReference type="GO" id="GO:0005549">
    <property type="term" value="F:odorant binding"/>
    <property type="evidence" value="ECO:0000250"/>
    <property type="project" value="FlyBase"/>
</dbReference>
<dbReference type="GO" id="GO:0042048">
    <property type="term" value="P:olfactory behavior"/>
    <property type="evidence" value="ECO:0000250"/>
    <property type="project" value="UniProtKB"/>
</dbReference>
<dbReference type="GO" id="GO:0019236">
    <property type="term" value="P:response to pheromone"/>
    <property type="evidence" value="ECO:0000250"/>
    <property type="project" value="UniProtKB"/>
</dbReference>
<dbReference type="GO" id="GO:0007606">
    <property type="term" value="P:sensory perception of chemical stimulus"/>
    <property type="evidence" value="ECO:0000250"/>
    <property type="project" value="FlyBase"/>
</dbReference>
<dbReference type="GO" id="GO:0007608">
    <property type="term" value="P:sensory perception of smell"/>
    <property type="evidence" value="ECO:0000318"/>
    <property type="project" value="GO_Central"/>
</dbReference>
<dbReference type="CDD" id="cd23992">
    <property type="entry name" value="PBP_GOBP"/>
    <property type="match status" value="1"/>
</dbReference>
<dbReference type="FunFam" id="1.10.238.20:FF:000005">
    <property type="entry name" value="Odorant-binding protein 99a"/>
    <property type="match status" value="1"/>
</dbReference>
<dbReference type="Gene3D" id="1.10.238.20">
    <property type="entry name" value="Pheromone/general odorant binding protein domain"/>
    <property type="match status" value="1"/>
</dbReference>
<dbReference type="InterPro" id="IPR006170">
    <property type="entry name" value="PBP/GOBP"/>
</dbReference>
<dbReference type="InterPro" id="IPR036728">
    <property type="entry name" value="PBP_GOBP_sf"/>
</dbReference>
<dbReference type="PANTHER" id="PTHR11857:SF46">
    <property type="entry name" value="GENERAL ODORANT-BINDING PROTEIN 99A-RELATED"/>
    <property type="match status" value="1"/>
</dbReference>
<dbReference type="PANTHER" id="PTHR11857">
    <property type="entry name" value="ODORANT BINDING PROTEIN-RELATED"/>
    <property type="match status" value="1"/>
</dbReference>
<dbReference type="Pfam" id="PF01395">
    <property type="entry name" value="PBP_GOBP"/>
    <property type="match status" value="1"/>
</dbReference>
<dbReference type="SMART" id="SM00708">
    <property type="entry name" value="PhBP"/>
    <property type="match status" value="1"/>
</dbReference>
<dbReference type="SUPFAM" id="SSF47565">
    <property type="entry name" value="Insect pheromone/odorant-binding proteins"/>
    <property type="match status" value="1"/>
</dbReference>
<reference key="1">
    <citation type="journal article" date="2007" name="Genetics">
        <title>Association of polymorphisms in odorant-binding protein genes with variation in olfactory response to benzaldehyde in Drosophila.</title>
        <authorList>
            <person name="Wang P."/>
            <person name="Lyman R.F."/>
            <person name="Shabalina S.A."/>
            <person name="Mackay T.F.C."/>
            <person name="Anholt R.R.H."/>
        </authorList>
    </citation>
    <scope>NUCLEOTIDE SEQUENCE [GENOMIC DNA]</scope>
    <scope>VARIANTS LEU-13; PRO-19; ALA-38; ASP-82; SER-117 AND ARG-140</scope>
    <source>
        <strain>100A</strain>
        <strain>101A</strain>
        <strain>105A</strain>
        <strain>109A</strain>
        <strain>10A</strain>
        <strain>136A</strain>
        <strain>149A</strain>
        <strain>158A</strain>
        <strain>176A</strain>
        <strain>177A</strain>
        <strain>189A</strain>
        <strain>195A</strain>
        <strain>208A</strain>
        <strain>210A</strain>
        <strain>217A</strain>
        <strain>21A</strain>
        <strain>223A</strain>
        <strain>227A</strain>
        <strain>229A</strain>
        <strain>233A</strain>
        <strain>235A</strain>
        <strain>237A</strain>
        <strain>239A</strain>
        <strain>23A</strain>
        <strain>256A</strain>
        <strain>28A</strain>
        <strain>301A</strain>
        <strain>303A</strain>
        <strain>304A</strain>
        <strain>306A</strain>
        <strain>307A</strain>
        <strain>312A</strain>
        <strain>313A</strain>
        <strain>315A</strain>
        <strain>318A</strain>
        <strain>319A</strain>
        <strain>322A</strain>
        <strain>324A</strain>
        <strain>325A</strain>
        <strain>32A</strain>
        <strain>332A</strain>
        <strain>335A</strain>
        <strain>336A</strain>
        <strain>338A</strain>
        <strain>340A</strain>
        <strain>348A</strain>
        <strain>350A</strain>
        <strain>352A</strain>
        <strain>356A</strain>
        <strain>357A</strain>
        <strain>358A</strain>
        <strain>359A</strain>
        <strain>360A</strain>
        <strain>361A</strain>
        <strain>362A</strain>
        <strain>365A</strain>
        <strain>367A</strain>
        <strain>371A</strain>
        <strain>375A</strain>
        <strain>380A</strain>
        <strain>383A</strain>
        <strain>387A</strain>
        <strain>38A</strain>
        <strain>390A</strain>
        <strain>393A</strain>
        <strain>397A</strain>
        <strain>398A</strain>
        <strain>399b</strain>
        <strain>405A</strain>
        <strain>40A</strain>
        <strain>41A</strain>
        <strain>42A</strain>
        <strain>443A</strain>
        <strain>486A</strain>
        <strain>48A</strain>
        <strain>49A</strain>
        <strain>508A</strain>
        <strain>509A</strain>
        <strain>513A</strain>
        <strain>514A</strain>
        <strain>517A</strain>
        <strain>528A</strain>
        <strain>530A</strain>
        <strain>531A</strain>
        <strain>554A</strain>
        <strain>563A</strain>
        <strain>57A</strain>
        <strain>581A</strain>
        <strain>588A</strain>
        <strain>589A</strain>
        <strain>591A</strain>
        <strain>596A</strain>
        <strain>59A</strain>
        <strain>627A</strain>
        <strain>630A</strain>
        <strain>639A</strain>
        <strain>663A</strain>
        <strain>672A</strain>
        <strain>69A</strain>
        <strain>702A</strain>
        <strain>703A</strain>
        <strain>705A</strain>
        <strain>707A</strain>
        <strain>712A</strain>
        <strain>713A</strain>
        <strain>716A</strain>
        <strain>722A</strain>
        <strain>730A</strain>
        <strain>732A</strain>
        <strain>734A</strain>
        <strain>735A</strain>
        <strain>736A</strain>
        <strain>737A</strain>
        <strain>739A</strain>
        <strain>740A</strain>
        <strain>744A</strain>
        <strain>748A</strain>
        <strain>751A</strain>
        <strain>752A</strain>
        <strain>757A</strain>
        <strain>759A</strain>
        <strain>761A</strain>
        <strain>762A</strain>
        <strain>765A</strain>
        <strain>767A</strain>
        <strain>770A</strain>
        <strain>773A</strain>
        <strain>774A</strain>
        <strain>786A</strain>
        <strain>787A</strain>
        <strain>793A</strain>
        <strain>797A</strain>
        <strain>799b</strain>
        <strain>804A</strain>
        <strain>808A</strain>
        <strain>813A</strain>
        <strain>820A</strain>
        <strain>822A</strain>
        <strain>832A</strain>
        <strain>833A</strain>
        <strain>834A</strain>
        <strain>836A</strain>
        <strain>838A</strain>
        <strain>83A</strain>
        <strain>841A</strain>
        <strain>846A</strain>
        <strain>848A</strain>
        <strain>849A</strain>
        <strain>850A</strain>
        <strain>851A</strain>
        <strain>852A</strain>
        <strain>853A</strain>
        <strain>855A</strain>
        <strain>859A</strain>
        <strain>85A</strain>
        <strain>868A</strain>
        <strain>88A</strain>
        <strain>907A</strain>
        <strain>911A</strain>
        <strain>91A</strain>
    </source>
</reference>
<reference key="2">
    <citation type="journal article" date="2000" name="Science">
        <title>The genome sequence of Drosophila melanogaster.</title>
        <authorList>
            <person name="Adams M.D."/>
            <person name="Celniker S.E."/>
            <person name="Holt R.A."/>
            <person name="Evans C.A."/>
            <person name="Gocayne J.D."/>
            <person name="Amanatides P.G."/>
            <person name="Scherer S.E."/>
            <person name="Li P.W."/>
            <person name="Hoskins R.A."/>
            <person name="Galle R.F."/>
            <person name="George R.A."/>
            <person name="Lewis S.E."/>
            <person name="Richards S."/>
            <person name="Ashburner M."/>
            <person name="Henderson S.N."/>
            <person name="Sutton G.G."/>
            <person name="Wortman J.R."/>
            <person name="Yandell M.D."/>
            <person name="Zhang Q."/>
            <person name="Chen L.X."/>
            <person name="Brandon R.C."/>
            <person name="Rogers Y.-H.C."/>
            <person name="Blazej R.G."/>
            <person name="Champe M."/>
            <person name="Pfeiffer B.D."/>
            <person name="Wan K.H."/>
            <person name="Doyle C."/>
            <person name="Baxter E.G."/>
            <person name="Helt G."/>
            <person name="Nelson C.R."/>
            <person name="Miklos G.L.G."/>
            <person name="Abril J.F."/>
            <person name="Agbayani A."/>
            <person name="An H.-J."/>
            <person name="Andrews-Pfannkoch C."/>
            <person name="Baldwin D."/>
            <person name="Ballew R.M."/>
            <person name="Basu A."/>
            <person name="Baxendale J."/>
            <person name="Bayraktaroglu L."/>
            <person name="Beasley E.M."/>
            <person name="Beeson K.Y."/>
            <person name="Benos P.V."/>
            <person name="Berman B.P."/>
            <person name="Bhandari D."/>
            <person name="Bolshakov S."/>
            <person name="Borkova D."/>
            <person name="Botchan M.R."/>
            <person name="Bouck J."/>
            <person name="Brokstein P."/>
            <person name="Brottier P."/>
            <person name="Burtis K.C."/>
            <person name="Busam D.A."/>
            <person name="Butler H."/>
            <person name="Cadieu E."/>
            <person name="Center A."/>
            <person name="Chandra I."/>
            <person name="Cherry J.M."/>
            <person name="Cawley S."/>
            <person name="Dahlke C."/>
            <person name="Davenport L.B."/>
            <person name="Davies P."/>
            <person name="de Pablos B."/>
            <person name="Delcher A."/>
            <person name="Deng Z."/>
            <person name="Mays A.D."/>
            <person name="Dew I."/>
            <person name="Dietz S.M."/>
            <person name="Dodson K."/>
            <person name="Doup L.E."/>
            <person name="Downes M."/>
            <person name="Dugan-Rocha S."/>
            <person name="Dunkov B.C."/>
            <person name="Dunn P."/>
            <person name="Durbin K.J."/>
            <person name="Evangelista C.C."/>
            <person name="Ferraz C."/>
            <person name="Ferriera S."/>
            <person name="Fleischmann W."/>
            <person name="Fosler C."/>
            <person name="Gabrielian A.E."/>
            <person name="Garg N.S."/>
            <person name="Gelbart W.M."/>
            <person name="Glasser K."/>
            <person name="Glodek A."/>
            <person name="Gong F."/>
            <person name="Gorrell J.H."/>
            <person name="Gu Z."/>
            <person name="Guan P."/>
            <person name="Harris M."/>
            <person name="Harris N.L."/>
            <person name="Harvey D.A."/>
            <person name="Heiman T.J."/>
            <person name="Hernandez J.R."/>
            <person name="Houck J."/>
            <person name="Hostin D."/>
            <person name="Houston K.A."/>
            <person name="Howland T.J."/>
            <person name="Wei M.-H."/>
            <person name="Ibegwam C."/>
            <person name="Jalali M."/>
            <person name="Kalush F."/>
            <person name="Karpen G.H."/>
            <person name="Ke Z."/>
            <person name="Kennison J.A."/>
            <person name="Ketchum K.A."/>
            <person name="Kimmel B.E."/>
            <person name="Kodira C.D."/>
            <person name="Kraft C.L."/>
            <person name="Kravitz S."/>
            <person name="Kulp D."/>
            <person name="Lai Z."/>
            <person name="Lasko P."/>
            <person name="Lei Y."/>
            <person name="Levitsky A.A."/>
            <person name="Li J.H."/>
            <person name="Li Z."/>
            <person name="Liang Y."/>
            <person name="Lin X."/>
            <person name="Liu X."/>
            <person name="Mattei B."/>
            <person name="McIntosh T.C."/>
            <person name="McLeod M.P."/>
            <person name="McPherson D."/>
            <person name="Merkulov G."/>
            <person name="Milshina N.V."/>
            <person name="Mobarry C."/>
            <person name="Morris J."/>
            <person name="Moshrefi A."/>
            <person name="Mount S.M."/>
            <person name="Moy M."/>
            <person name="Murphy B."/>
            <person name="Murphy L."/>
            <person name="Muzny D.M."/>
            <person name="Nelson D.L."/>
            <person name="Nelson D.R."/>
            <person name="Nelson K.A."/>
            <person name="Nixon K."/>
            <person name="Nusskern D.R."/>
            <person name="Pacleb J.M."/>
            <person name="Palazzolo M."/>
            <person name="Pittman G.S."/>
            <person name="Pan S."/>
            <person name="Pollard J."/>
            <person name="Puri V."/>
            <person name="Reese M.G."/>
            <person name="Reinert K."/>
            <person name="Remington K."/>
            <person name="Saunders R.D.C."/>
            <person name="Scheeler F."/>
            <person name="Shen H."/>
            <person name="Shue B.C."/>
            <person name="Siden-Kiamos I."/>
            <person name="Simpson M."/>
            <person name="Skupski M.P."/>
            <person name="Smith T.J."/>
            <person name="Spier E."/>
            <person name="Spradling A.C."/>
            <person name="Stapleton M."/>
            <person name="Strong R."/>
            <person name="Sun E."/>
            <person name="Svirskas R."/>
            <person name="Tector C."/>
            <person name="Turner R."/>
            <person name="Venter E."/>
            <person name="Wang A.H."/>
            <person name="Wang X."/>
            <person name="Wang Z.-Y."/>
            <person name="Wassarman D.A."/>
            <person name="Weinstock G.M."/>
            <person name="Weissenbach J."/>
            <person name="Williams S.M."/>
            <person name="Woodage T."/>
            <person name="Worley K.C."/>
            <person name="Wu D."/>
            <person name="Yang S."/>
            <person name="Yao Q.A."/>
            <person name="Ye J."/>
            <person name="Yeh R.-F."/>
            <person name="Zaveri J.S."/>
            <person name="Zhan M."/>
            <person name="Zhang G."/>
            <person name="Zhao Q."/>
            <person name="Zheng L."/>
            <person name="Zheng X.H."/>
            <person name="Zhong F.N."/>
            <person name="Zhong W."/>
            <person name="Zhou X."/>
            <person name="Zhu S.C."/>
            <person name="Zhu X."/>
            <person name="Smith H.O."/>
            <person name="Gibbs R.A."/>
            <person name="Myers E.W."/>
            <person name="Rubin G.M."/>
            <person name="Venter J.C."/>
        </authorList>
    </citation>
    <scope>NUCLEOTIDE SEQUENCE [LARGE SCALE GENOMIC DNA]</scope>
    <source>
        <strain>Berkeley</strain>
    </source>
</reference>
<reference key="3">
    <citation type="journal article" date="2002" name="Genome Biol.">
        <title>Annotation of the Drosophila melanogaster euchromatic genome: a systematic review.</title>
        <authorList>
            <person name="Misra S."/>
            <person name="Crosby M.A."/>
            <person name="Mungall C.J."/>
            <person name="Matthews B.B."/>
            <person name="Campbell K.S."/>
            <person name="Hradecky P."/>
            <person name="Huang Y."/>
            <person name="Kaminker J.S."/>
            <person name="Millburn G.H."/>
            <person name="Prochnik S.E."/>
            <person name="Smith C.D."/>
            <person name="Tupy J.L."/>
            <person name="Whitfield E.J."/>
            <person name="Bayraktaroglu L."/>
            <person name="Berman B.P."/>
            <person name="Bettencourt B.R."/>
            <person name="Celniker S.E."/>
            <person name="de Grey A.D.N.J."/>
            <person name="Drysdale R.A."/>
            <person name="Harris N.L."/>
            <person name="Richter J."/>
            <person name="Russo S."/>
            <person name="Schroeder A.J."/>
            <person name="Shu S.Q."/>
            <person name="Stapleton M."/>
            <person name="Yamada C."/>
            <person name="Ashburner M."/>
            <person name="Gelbart W.M."/>
            <person name="Rubin G.M."/>
            <person name="Lewis S.E."/>
        </authorList>
    </citation>
    <scope>GENOME REANNOTATION</scope>
    <source>
        <strain>Berkeley</strain>
    </source>
</reference>
<reference key="4">
    <citation type="journal article" date="2002" name="Genome Biol.">
        <title>A Drosophila full-length cDNA resource.</title>
        <authorList>
            <person name="Stapleton M."/>
            <person name="Carlson J.W."/>
            <person name="Brokstein P."/>
            <person name="Yu C."/>
            <person name="Champe M."/>
            <person name="George R.A."/>
            <person name="Guarin H."/>
            <person name="Kronmiller B."/>
            <person name="Pacleb J.M."/>
            <person name="Park S."/>
            <person name="Wan K.H."/>
            <person name="Rubin G.M."/>
            <person name="Celniker S.E."/>
        </authorList>
    </citation>
    <scope>NUCLEOTIDE SEQUENCE [LARGE SCALE MRNA]</scope>
    <source>
        <strain>Berkeley</strain>
        <tissue>Larva</tissue>
        <tissue>Pupae</tissue>
    </source>
</reference>
<reference key="5">
    <citation type="journal article" date="2001" name="Genetics">
        <title>A large family of divergent Drosophila odorant-binding proteins expressed in gustatory and olfactory sensilla.</title>
        <authorList>
            <person name="Galindo K."/>
            <person name="Smith D.P."/>
        </authorList>
    </citation>
    <scope>IDENTIFICATION</scope>
    <scope>TISSUE SPECIFICITY</scope>
</reference>
<accession>Q9VAI6</accession>
<accession>A9QJ16</accession>
<accession>A9QJ18</accession>
<accession>A9QJ19</accession>
<accession>A9QJ29</accession>
<accession>A9QJ60</accession>
<accession>A9QJ64</accession>
<accession>A9QJ66</accession>
<accession>A9QJD0</accession>
<accession>A9QJD5</accession>
<accession>A9QJE9</accession>
<accession>A9QJI9</accession>
<protein>
    <recommendedName>
        <fullName>General odorant-binding protein 99b</fullName>
    </recommendedName>
</protein>
<feature type="signal peptide" evidence="2">
    <location>
        <begin position="1"/>
        <end position="16"/>
    </location>
</feature>
<feature type="chain" id="PRO_0000012579" description="General odorant-binding protein 99b">
    <location>
        <begin position="17"/>
        <end position="149"/>
    </location>
</feature>
<feature type="disulfide bond" evidence="1">
    <location>
        <begin position="40"/>
        <end position="71"/>
    </location>
</feature>
<feature type="disulfide bond" evidence="1">
    <location>
        <begin position="67"/>
        <end position="125"/>
    </location>
</feature>
<feature type="disulfide bond" evidence="1">
    <location>
        <begin position="114"/>
        <end position="134"/>
    </location>
</feature>
<feature type="sequence variant" description="In strain: 386A and 387A." evidence="4">
    <original>F</original>
    <variation>L</variation>
    <location>
        <position position="13"/>
    </location>
</feature>
<feature type="sequence variant" description="In strain: 405A." evidence="4">
    <original>H</original>
    <variation>P</variation>
    <location>
        <position position="19"/>
    </location>
</feature>
<feature type="sequence variant" description="In strain: 509A." evidence="4">
    <original>T</original>
    <variation>A</variation>
    <location>
        <position position="38"/>
    </location>
</feature>
<feature type="sequence variant" description="In strain: 10A, 100A, 101A, 149A, 158A, 189A, 195A, 223A, 233A, 237A, 28A, 303A, 312A, 319A, 324A, 325A, 32A, 335A, 340A, 348A, 350A, 352A, 356A, 358A, 359A, 360A, 362A, 365A, 367A, 371A, 380A, 383A, 386A, 387A, 390A, 393A, 398A, 40A, 405A, 41A, 443A, 486A, 514A, 517A, 528A, 554A, 59A, 627A, 639A, 672A, 703A, 707A, 712A, 730A, 739A, 761A, 762A, 767A, 770A, 786A, 788A, 793A, 804A, 820A, 833A, 834A, 836A, 849A, 850A, 851A, 852A, 853A and 855A." evidence="4">
    <original>E</original>
    <variation>D</variation>
    <location>
        <position position="82"/>
    </location>
</feature>
<feature type="sequence variant" description="In strain: 10A, 336A, 338A, 581A, 663A, 786A and 911A." evidence="4">
    <original>T</original>
    <variation>S</variation>
    <location>
        <position position="117"/>
    </location>
</feature>
<feature type="sequence variant" description="In strain: 788A." evidence="4">
    <original>L</original>
    <variation>R</variation>
    <location>
        <position position="140"/>
    </location>
</feature>
<organism>
    <name type="scientific">Drosophila melanogaster</name>
    <name type="common">Fruit fly</name>
    <dbReference type="NCBI Taxonomy" id="7227"/>
    <lineage>
        <taxon>Eukaryota</taxon>
        <taxon>Metazoa</taxon>
        <taxon>Ecdysozoa</taxon>
        <taxon>Arthropoda</taxon>
        <taxon>Hexapoda</taxon>
        <taxon>Insecta</taxon>
        <taxon>Pterygota</taxon>
        <taxon>Neoptera</taxon>
        <taxon>Endopterygota</taxon>
        <taxon>Diptera</taxon>
        <taxon>Brachycera</taxon>
        <taxon>Muscomorpha</taxon>
        <taxon>Ephydroidea</taxon>
        <taxon>Drosophilidae</taxon>
        <taxon>Drosophila</taxon>
        <taxon>Sophophora</taxon>
    </lineage>
</organism>
<proteinExistence type="evidence at transcript level"/>
<keyword id="KW-1015">Disulfide bond</keyword>
<keyword id="KW-0552">Olfaction</keyword>
<keyword id="KW-1185">Reference proteome</keyword>
<keyword id="KW-0964">Secreted</keyword>
<keyword id="KW-0716">Sensory transduction</keyword>
<keyword id="KW-0732">Signal</keyword>
<keyword id="KW-0813">Transport</keyword>
<comment type="function">
    <text evidence="1">Present in the aqueous fluid surrounding olfactory sensory dendrites and are thought to aid in the capture and transport of hydrophobic odorants into and through this fluid.</text>
</comment>
<comment type="subcellular location">
    <subcellularLocation>
        <location evidence="1">Secreted</location>
    </subcellularLocation>
</comment>
<comment type="tissue specificity">
    <text evidence="3">Expressed in adult olfactory system. Expressed in subsets of sensilla in both olfactory organs, the maxillary palps, and third antennal segments.</text>
</comment>
<comment type="similarity">
    <text evidence="5">Belongs to the PBP/GOBP family.</text>
</comment>
<gene>
    <name type="primary">Obp99b</name>
    <name type="ORF">CG7592</name>
</gene>